<organism>
    <name type="scientific">Escherichia coli (strain K12 / DH10B)</name>
    <dbReference type="NCBI Taxonomy" id="316385"/>
    <lineage>
        <taxon>Bacteria</taxon>
        <taxon>Pseudomonadati</taxon>
        <taxon>Pseudomonadota</taxon>
        <taxon>Gammaproteobacteria</taxon>
        <taxon>Enterobacterales</taxon>
        <taxon>Enterobacteriaceae</taxon>
        <taxon>Escherichia</taxon>
    </lineage>
</organism>
<comment type="function">
    <text evidence="1">Site-specific tyrosine recombinase, which acts by catalyzing the cutting and rejoining of the recombining DNA molecules. Binds cooperatively to specific DNA consensus sequences that are separated from XerD binding sites by a short central region, forming the heterotetrameric XerC-XerD complex that recombines DNA substrates. The complex is essential to convert dimers of the bacterial chromosome into monomers to permit their segregation at cell division. It also contributes to the segregational stability of plasmids. In the complex XerC specifically exchanges the top DNA strands.</text>
</comment>
<comment type="activity regulation">
    <text evidence="1">FtsK may regulate the catalytic switch between XerC and XerD in the heterotetrameric complex during the two steps of the recombination process.</text>
</comment>
<comment type="subunit">
    <text evidence="1">Forms a cyclic heterotetrameric complex composed of two molecules of XerC and two molecules of XerD, in which XerC interacts with XerD via its C-terminal region, XerD interacts with XerC via its C-terminal region and so on.</text>
</comment>
<comment type="subcellular location">
    <subcellularLocation>
        <location evidence="1">Cytoplasm</location>
    </subcellularLocation>
</comment>
<comment type="similarity">
    <text evidence="1">Belongs to the 'phage' integrase family. XerC subfamily.</text>
</comment>
<gene>
    <name evidence="1" type="primary">xerC</name>
    <name type="ordered locus">ECDH10B_4003</name>
</gene>
<accession>B1XAH7</accession>
<evidence type="ECO:0000255" key="1">
    <source>
        <dbReference type="HAMAP-Rule" id="MF_01808"/>
    </source>
</evidence>
<evidence type="ECO:0000255" key="2">
    <source>
        <dbReference type="PROSITE-ProRule" id="PRU01246"/>
    </source>
</evidence>
<evidence type="ECO:0000255" key="3">
    <source>
        <dbReference type="PROSITE-ProRule" id="PRU01248"/>
    </source>
</evidence>
<feature type="chain" id="PRO_1000187594" description="Tyrosine recombinase XerC">
    <location>
        <begin position="1"/>
        <end position="298"/>
    </location>
</feature>
<feature type="domain" description="Core-binding (CB)" evidence="3">
    <location>
        <begin position="2"/>
        <end position="88"/>
    </location>
</feature>
<feature type="domain" description="Tyr recombinase" evidence="2">
    <location>
        <begin position="109"/>
        <end position="288"/>
    </location>
</feature>
<feature type="active site" evidence="1">
    <location>
        <position position="148"/>
    </location>
</feature>
<feature type="active site" evidence="1">
    <location>
        <position position="172"/>
    </location>
</feature>
<feature type="active site" evidence="1">
    <location>
        <position position="240"/>
    </location>
</feature>
<feature type="active site" evidence="1">
    <location>
        <position position="243"/>
    </location>
</feature>
<feature type="active site" evidence="1">
    <location>
        <position position="266"/>
    </location>
</feature>
<feature type="active site" description="O-(3'-phospho-DNA)-tyrosine intermediate" evidence="1">
    <location>
        <position position="275"/>
    </location>
</feature>
<dbReference type="EMBL" id="CP000948">
    <property type="protein sequence ID" value="ACB04835.1"/>
    <property type="molecule type" value="Genomic_DNA"/>
</dbReference>
<dbReference type="RefSeq" id="WP_000130691.1">
    <property type="nucleotide sequence ID" value="NC_010473.1"/>
</dbReference>
<dbReference type="SMR" id="B1XAH7"/>
<dbReference type="GeneID" id="75059707"/>
<dbReference type="KEGG" id="ecd:ECDH10B_4003"/>
<dbReference type="HOGENOM" id="CLU_027562_9_0_6"/>
<dbReference type="GO" id="GO:0005737">
    <property type="term" value="C:cytoplasm"/>
    <property type="evidence" value="ECO:0007669"/>
    <property type="project" value="UniProtKB-SubCell"/>
</dbReference>
<dbReference type="GO" id="GO:0003677">
    <property type="term" value="F:DNA binding"/>
    <property type="evidence" value="ECO:0007669"/>
    <property type="project" value="UniProtKB-KW"/>
</dbReference>
<dbReference type="GO" id="GO:0009037">
    <property type="term" value="F:tyrosine-based site-specific recombinase activity"/>
    <property type="evidence" value="ECO:0007669"/>
    <property type="project" value="UniProtKB-UniRule"/>
</dbReference>
<dbReference type="GO" id="GO:0051301">
    <property type="term" value="P:cell division"/>
    <property type="evidence" value="ECO:0007669"/>
    <property type="project" value="UniProtKB-KW"/>
</dbReference>
<dbReference type="GO" id="GO:0007059">
    <property type="term" value="P:chromosome segregation"/>
    <property type="evidence" value="ECO:0007669"/>
    <property type="project" value="UniProtKB-UniRule"/>
</dbReference>
<dbReference type="GO" id="GO:0006313">
    <property type="term" value="P:DNA transposition"/>
    <property type="evidence" value="ECO:0007669"/>
    <property type="project" value="UniProtKB-UniRule"/>
</dbReference>
<dbReference type="CDD" id="cd00798">
    <property type="entry name" value="INT_XerDC_C"/>
    <property type="match status" value="1"/>
</dbReference>
<dbReference type="FunFam" id="1.10.443.10:FF:000002">
    <property type="entry name" value="Tyrosine recombinase XerC"/>
    <property type="match status" value="1"/>
</dbReference>
<dbReference type="Gene3D" id="1.10.150.130">
    <property type="match status" value="1"/>
</dbReference>
<dbReference type="Gene3D" id="1.10.443.10">
    <property type="entry name" value="Intergrase catalytic core"/>
    <property type="match status" value="1"/>
</dbReference>
<dbReference type="HAMAP" id="MF_01808">
    <property type="entry name" value="Recomb_XerC_XerD"/>
    <property type="match status" value="1"/>
</dbReference>
<dbReference type="InterPro" id="IPR044068">
    <property type="entry name" value="CB"/>
</dbReference>
<dbReference type="InterPro" id="IPR011010">
    <property type="entry name" value="DNA_brk_join_enz"/>
</dbReference>
<dbReference type="InterPro" id="IPR013762">
    <property type="entry name" value="Integrase-like_cat_sf"/>
</dbReference>
<dbReference type="InterPro" id="IPR002104">
    <property type="entry name" value="Integrase_catalytic"/>
</dbReference>
<dbReference type="InterPro" id="IPR010998">
    <property type="entry name" value="Integrase_recombinase_N"/>
</dbReference>
<dbReference type="InterPro" id="IPR004107">
    <property type="entry name" value="Integrase_SAM-like_N"/>
</dbReference>
<dbReference type="InterPro" id="IPR011931">
    <property type="entry name" value="Recomb_XerC"/>
</dbReference>
<dbReference type="InterPro" id="IPR023009">
    <property type="entry name" value="Tyrosine_recombinase_XerC/XerD"/>
</dbReference>
<dbReference type="InterPro" id="IPR050090">
    <property type="entry name" value="Tyrosine_recombinase_XerCD"/>
</dbReference>
<dbReference type="NCBIfam" id="NF001399">
    <property type="entry name" value="PRK00283.1"/>
    <property type="match status" value="1"/>
</dbReference>
<dbReference type="NCBIfam" id="TIGR02224">
    <property type="entry name" value="recomb_XerC"/>
    <property type="match status" value="1"/>
</dbReference>
<dbReference type="PANTHER" id="PTHR30349">
    <property type="entry name" value="PHAGE INTEGRASE-RELATED"/>
    <property type="match status" value="1"/>
</dbReference>
<dbReference type="PANTHER" id="PTHR30349:SF81">
    <property type="entry name" value="TYROSINE RECOMBINASE XERC"/>
    <property type="match status" value="1"/>
</dbReference>
<dbReference type="Pfam" id="PF02899">
    <property type="entry name" value="Phage_int_SAM_1"/>
    <property type="match status" value="1"/>
</dbReference>
<dbReference type="Pfam" id="PF00589">
    <property type="entry name" value="Phage_integrase"/>
    <property type="match status" value="1"/>
</dbReference>
<dbReference type="SUPFAM" id="SSF56349">
    <property type="entry name" value="DNA breaking-rejoining enzymes"/>
    <property type="match status" value="1"/>
</dbReference>
<dbReference type="SUPFAM" id="SSF47823">
    <property type="entry name" value="lambda integrase-like, N-terminal domain"/>
    <property type="match status" value="1"/>
</dbReference>
<dbReference type="PROSITE" id="PS51900">
    <property type="entry name" value="CB"/>
    <property type="match status" value="1"/>
</dbReference>
<dbReference type="PROSITE" id="PS51898">
    <property type="entry name" value="TYR_RECOMBINASE"/>
    <property type="match status" value="1"/>
</dbReference>
<name>XERC_ECODH</name>
<keyword id="KW-0131">Cell cycle</keyword>
<keyword id="KW-0132">Cell division</keyword>
<keyword id="KW-0159">Chromosome partition</keyword>
<keyword id="KW-0963">Cytoplasm</keyword>
<keyword id="KW-0229">DNA integration</keyword>
<keyword id="KW-0233">DNA recombination</keyword>
<keyword id="KW-0238">DNA-binding</keyword>
<proteinExistence type="inferred from homology"/>
<protein>
    <recommendedName>
        <fullName evidence="1">Tyrosine recombinase XerC</fullName>
    </recommendedName>
</protein>
<reference key="1">
    <citation type="journal article" date="2008" name="J. Bacteriol.">
        <title>The complete genome sequence of Escherichia coli DH10B: insights into the biology of a laboratory workhorse.</title>
        <authorList>
            <person name="Durfee T."/>
            <person name="Nelson R."/>
            <person name="Baldwin S."/>
            <person name="Plunkett G. III"/>
            <person name="Burland V."/>
            <person name="Mau B."/>
            <person name="Petrosino J.F."/>
            <person name="Qin X."/>
            <person name="Muzny D.M."/>
            <person name="Ayele M."/>
            <person name="Gibbs R.A."/>
            <person name="Csorgo B."/>
            <person name="Posfai G."/>
            <person name="Weinstock G.M."/>
            <person name="Blattner F.R."/>
        </authorList>
    </citation>
    <scope>NUCLEOTIDE SEQUENCE [LARGE SCALE GENOMIC DNA]</scope>
    <source>
        <strain>K12 / DH10B</strain>
    </source>
</reference>
<sequence length="298" mass="33868">MTDLHTDVERYLRYLSVERQLSPITLLNYQRQLEAIINFASENGLQSWQQCDVTMVRNFAVRSRRKGLGAASLALRLSALRSFFDWLVSQNELKANPAKGVSAPKAPRHLPKNIDVDDMNRLLDIDINDPLAVRDRAMLEVMYGAGLRLSELVGLDIKHLDLESGEVWVMGKGSKERRLPIGRNAVAWIEHWLDLRDLFGSEDDALFLSKLGKRISARNVQKRFAEWGIKQGLNNHVHPHKLRHSFATHMLESSGDLRGVQELLGHANLSTTQIYTHLDFQHLASVYDAAHPRAKRGK</sequence>